<sequence length="636" mass="71393">MCGICCVVALSSQHTICDYFSKDLHCHLRRRGPDSSQQLIKTVSEPSYECFFSGHVLHLRGLMTPQPLEDVNNNIFFWNGEIFNGVHVGDSENDTEVMFRHLALCSSEADILSLFSSLRGPWSFIYYQASGHSLWFGRDYFGRRSLLWQLSNVSDGAFCLTSVSVNSESCNQCQEVPASGIFKMDLRDCATTKSLSLTLFPWKYKCTEKNEEEIFIDVLDQVSKDLPNHITVVMNESKLCLSAPVIPLNRTISEASVEHVSSDSSKTSSVVSLETLQGYLAVEHKRKVVHQFIDVLDEAVKRRVLLLRRGEDEGTGQVQGVSPRKAHVAVLFSGGVDSMVIAALADRHVPLEEPIDLLNVAFMTKEQTKRTGTTKNCIRQEMKLDLHRGEENHKDLDAKMGDDLSCFDVPDRITGRAGLKELEALNPSRTWNFVEINVTLKELKEMRRRFINHLIYPLDTVLDDSIGCAIWFASRGEGYINKQGEMKPYKSPAKVVLTGIGADEQLAGYSRHRICFRKCGPEGLNKELEMELGRISSRNLGRDDRIIGDHGKEARFPFIDEDVVSFLNSLPISEKADLTLPRGVGEKLILRLGAKELGLEAASILPKRAVQFGSRIAKLESNNEKAYHTCSRLKLF</sequence>
<protein>
    <recommendedName>
        <fullName>Asparagine synthetase domain-containing protein 1</fullName>
    </recommendedName>
</protein>
<gene>
    <name type="primary">ASNSD1</name>
    <name type="ORF">RCJMB04_16p18</name>
</gene>
<dbReference type="EMBL" id="AJ720404">
    <property type="protein sequence ID" value="CAG32063.1"/>
    <property type="molecule type" value="mRNA"/>
</dbReference>
<dbReference type="RefSeq" id="NP_001006509.1">
    <property type="nucleotide sequence ID" value="NM_001006509.1"/>
</dbReference>
<dbReference type="FunCoup" id="Q5ZJN0">
    <property type="interactions" value="1465"/>
</dbReference>
<dbReference type="STRING" id="9031.ENSGALP00000068013"/>
<dbReference type="PaxDb" id="9031-ENSGALP00000003773"/>
<dbReference type="GeneID" id="423983"/>
<dbReference type="KEGG" id="gga:423983"/>
<dbReference type="CTD" id="54529"/>
<dbReference type="VEuPathDB" id="HostDB:geneid_423983"/>
<dbReference type="eggNOG" id="KOG0573">
    <property type="taxonomic scope" value="Eukaryota"/>
</dbReference>
<dbReference type="InParanoid" id="Q5ZJN0"/>
<dbReference type="OrthoDB" id="10252281at2759"/>
<dbReference type="PhylomeDB" id="Q5ZJN0"/>
<dbReference type="PRO" id="PR:Q5ZJN0"/>
<dbReference type="Proteomes" id="UP000000539">
    <property type="component" value="Unassembled WGS sequence"/>
</dbReference>
<dbReference type="GO" id="GO:0004066">
    <property type="term" value="F:asparagine synthase (glutamine-hydrolyzing) activity"/>
    <property type="evidence" value="ECO:0007669"/>
    <property type="project" value="InterPro"/>
</dbReference>
<dbReference type="GO" id="GO:0006529">
    <property type="term" value="P:asparagine biosynthetic process"/>
    <property type="evidence" value="ECO:0007669"/>
    <property type="project" value="UniProtKB-KW"/>
</dbReference>
<dbReference type="CDD" id="cd01991">
    <property type="entry name" value="Asn_synthase_B_C"/>
    <property type="match status" value="1"/>
</dbReference>
<dbReference type="CDD" id="cd03766">
    <property type="entry name" value="Gn_AT_II_novel"/>
    <property type="match status" value="1"/>
</dbReference>
<dbReference type="Gene3D" id="3.60.20.10">
    <property type="entry name" value="Glutamine Phosphoribosylpyrophosphate, subunit 1, domain 1"/>
    <property type="match status" value="1"/>
</dbReference>
<dbReference type="Gene3D" id="3.40.50.620">
    <property type="entry name" value="HUPs"/>
    <property type="match status" value="1"/>
</dbReference>
<dbReference type="InterPro" id="IPR001962">
    <property type="entry name" value="Asn_synthase"/>
</dbReference>
<dbReference type="InterPro" id="IPR051857">
    <property type="entry name" value="Asn_synthetase_domain"/>
</dbReference>
<dbReference type="InterPro" id="IPR017932">
    <property type="entry name" value="GATase_2_dom"/>
</dbReference>
<dbReference type="InterPro" id="IPR029055">
    <property type="entry name" value="Ntn_hydrolases_N"/>
</dbReference>
<dbReference type="InterPro" id="IPR014729">
    <property type="entry name" value="Rossmann-like_a/b/a_fold"/>
</dbReference>
<dbReference type="PANTHER" id="PTHR45937">
    <property type="entry name" value="ASPARAGINE SYNTHETASE DOMAIN-CONTAINING PROTEIN 1"/>
    <property type="match status" value="1"/>
</dbReference>
<dbReference type="PANTHER" id="PTHR45937:SF1">
    <property type="entry name" value="ASPARAGINE SYNTHETASE DOMAIN-CONTAINING PROTEIN 1"/>
    <property type="match status" value="1"/>
</dbReference>
<dbReference type="Pfam" id="PF00733">
    <property type="entry name" value="Asn_synthase"/>
    <property type="match status" value="1"/>
</dbReference>
<dbReference type="SUPFAM" id="SSF52402">
    <property type="entry name" value="Adenine nucleotide alpha hydrolases-like"/>
    <property type="match status" value="1"/>
</dbReference>
<dbReference type="SUPFAM" id="SSF56235">
    <property type="entry name" value="N-terminal nucleophile aminohydrolases (Ntn hydrolases)"/>
    <property type="match status" value="1"/>
</dbReference>
<dbReference type="PROSITE" id="PS51278">
    <property type="entry name" value="GATASE_TYPE_2"/>
    <property type="match status" value="1"/>
</dbReference>
<evidence type="ECO:0000250" key="1"/>
<evidence type="ECO:0000255" key="2">
    <source>
        <dbReference type="PROSITE-ProRule" id="PRU00609"/>
    </source>
</evidence>
<name>ASND1_CHICK</name>
<proteinExistence type="evidence at transcript level"/>
<feature type="initiator methionine" description="Removed" evidence="1">
    <location>
        <position position="1"/>
    </location>
</feature>
<feature type="chain" id="PRO_0000324763" description="Asparagine synthetase domain-containing protein 1">
    <location>
        <begin position="2"/>
        <end position="636"/>
    </location>
</feature>
<feature type="domain" description="Glutamine amidotransferase type-2" evidence="2">
    <location>
        <begin position="2"/>
        <end position="187"/>
    </location>
</feature>
<feature type="domain" description="Asparagine synthetase">
    <location>
        <begin position="291"/>
        <end position="607"/>
    </location>
</feature>
<feature type="active site" description="Nucleophile" evidence="2">
    <location>
        <position position="2"/>
    </location>
</feature>
<keyword id="KW-0028">Amino-acid biosynthesis</keyword>
<keyword id="KW-0061">Asparagine biosynthesis</keyword>
<keyword id="KW-0315">Glutamine amidotransferase</keyword>
<keyword id="KW-1185">Reference proteome</keyword>
<reference key="1">
    <citation type="journal article" date="2005" name="Genome Biol.">
        <title>Full-length cDNAs from chicken bursal lymphocytes to facilitate gene function analysis.</title>
        <authorList>
            <person name="Caldwell R.B."/>
            <person name="Kierzek A.M."/>
            <person name="Arakawa H."/>
            <person name="Bezzubov Y."/>
            <person name="Zaim J."/>
            <person name="Fiedler P."/>
            <person name="Kutter S."/>
            <person name="Blagodatski A."/>
            <person name="Kostovska D."/>
            <person name="Koter M."/>
            <person name="Plachy J."/>
            <person name="Carninci P."/>
            <person name="Hayashizaki Y."/>
            <person name="Buerstedde J.-M."/>
        </authorList>
    </citation>
    <scope>NUCLEOTIDE SEQUENCE [LARGE SCALE MRNA]</scope>
    <source>
        <strain>CB</strain>
        <tissue>Bursa of Fabricius</tissue>
    </source>
</reference>
<organism>
    <name type="scientific">Gallus gallus</name>
    <name type="common">Chicken</name>
    <dbReference type="NCBI Taxonomy" id="9031"/>
    <lineage>
        <taxon>Eukaryota</taxon>
        <taxon>Metazoa</taxon>
        <taxon>Chordata</taxon>
        <taxon>Craniata</taxon>
        <taxon>Vertebrata</taxon>
        <taxon>Euteleostomi</taxon>
        <taxon>Archelosauria</taxon>
        <taxon>Archosauria</taxon>
        <taxon>Dinosauria</taxon>
        <taxon>Saurischia</taxon>
        <taxon>Theropoda</taxon>
        <taxon>Coelurosauria</taxon>
        <taxon>Aves</taxon>
        <taxon>Neognathae</taxon>
        <taxon>Galloanserae</taxon>
        <taxon>Galliformes</taxon>
        <taxon>Phasianidae</taxon>
        <taxon>Phasianinae</taxon>
        <taxon>Gallus</taxon>
    </lineage>
</organism>
<accession>Q5ZJN0</accession>